<evidence type="ECO:0000255" key="1">
    <source>
        <dbReference type="PROSITE-ProRule" id="PRU00251"/>
    </source>
</evidence>
<evidence type="ECO:0000269" key="2">
    <source>
    </source>
</evidence>
<evidence type="ECO:0000269" key="3">
    <source>
    </source>
</evidence>
<evidence type="ECO:0000269" key="4">
    <source>
    </source>
</evidence>
<evidence type="ECO:0000269" key="5">
    <source>
    </source>
</evidence>
<evidence type="ECO:0000305" key="6"/>
<proteinExistence type="evidence at protein level"/>
<comment type="function">
    <text>Probable transcription factor involved in the development of gametophytes and seeds.</text>
</comment>
<comment type="subunit">
    <text evidence="3 5">Interacts with AGL61/DIANA and AGL62.</text>
</comment>
<comment type="interaction">
    <interactant intactId="EBI-622157">
        <id>Q7XJK8</id>
    </interactant>
    <interactant intactId="EBI-622140">
        <id>Q9FKK2</id>
        <label>AGL62</label>
    </interactant>
    <organismsDiffer>false</organismsDiffer>
    <experiments>4</experiments>
</comment>
<comment type="interaction">
    <interactant intactId="EBI-622157">
        <id>Q7XJK8</id>
    </interactant>
    <interactant intactId="EBI-15194733">
        <id>A0MFC4</id>
    </interactant>
    <organismsDiffer>false</organismsDiffer>
    <experiments>3</experiments>
</comment>
<comment type="subcellular location">
    <subcellularLocation>
        <location evidence="1">Nucleus</location>
    </subcellularLocation>
</comment>
<comment type="tissue specificity">
    <text evidence="2">Male gametophyte, embryo and endosperm.</text>
</comment>
<comment type="induction">
    <text evidence="2 4">Repressed by MEA in seeds, and by PKL after germination.</text>
</comment>
<comment type="miscellaneous">
    <text>The PHE2 locus is imprinted in gametophytes. Maternal inherited gene is repressed in female gametophyte, while the paternal inherited gene is expressed in the male gametophyte (pollen tube) and in fertilized seeds. The maternal repression is dependent on MEA, which may modulate the methylation of the maternal locus, and repress its transcription.</text>
</comment>
<comment type="miscellaneous">
    <text>This protein was called 'Pheres' in memory of one of the murdered sons of the mythological 'Medea', as PHERES2 is repressed by MEDEA.</text>
</comment>
<comment type="sequence caution" evidence="6">
    <conflict type="erroneous initiation">
        <sequence resource="EMBL-CDS" id="AAC27141"/>
    </conflict>
</comment>
<protein>
    <recommendedName>
        <fullName>MADS-box transcription factor PHERES 2</fullName>
    </recommendedName>
    <alternativeName>
        <fullName>Agamous-like MADS-box protein AGL38</fullName>
    </alternativeName>
</protein>
<name>PHE2_ARATH</name>
<gene>
    <name type="primary">PHE2</name>
    <name type="synonym">AGL38</name>
    <name type="ordered locus">At1g65300</name>
    <name type="ORF">T8F5.8</name>
</gene>
<accession>Q7XJK8</accession>
<accession>O80802</accession>
<sequence length="278" mass="31658">MKRKMKLSLIENSVSRKTTFTKRKKGMTKKLTELVTLCGVEACAVVYSPFNSIPEAWPSREGVEDVVSKFMELSVLDRTKKMVDQETFISQRIAKEKEQLQKLRDENHNSQIRELMFGCLKGETNVYNLDGRDLQDLSLYIDKYLNGLTRRIEILIENGESSSSLPLPIVANAAAPVGFDGPMFQYHNQNQQKPVQFQYQALYDFYDQIPKKIHGFNMNMNKDSNQSMVLDLNQNLNDGEDEGIPCMDNNNYHPEIDCLATVTTAPTDVCAPNITNDL</sequence>
<reference key="1">
    <citation type="journal article" date="2003" name="Plant Cell">
        <title>Molecular and phylogenetic analyses of the complete MADS-box transcription factor family in Arabidopsis: new openings to the MADS world.</title>
        <authorList>
            <person name="Parenicova L."/>
            <person name="de Folter S."/>
            <person name="Kieffer M."/>
            <person name="Horner D.S."/>
            <person name="Favalli C."/>
            <person name="Busscher J."/>
            <person name="Cook H.E."/>
            <person name="Ingram R.M."/>
            <person name="Kater M.M."/>
            <person name="Davies B."/>
            <person name="Angenent G.C."/>
            <person name="Colombo L."/>
        </authorList>
    </citation>
    <scope>NUCLEOTIDE SEQUENCE [MRNA]</scope>
    <source>
        <strain>cv. Columbia</strain>
        <tissue>Silique</tissue>
    </source>
</reference>
<reference key="2">
    <citation type="journal article" date="2000" name="Nature">
        <title>Sequence and analysis of chromosome 1 of the plant Arabidopsis thaliana.</title>
        <authorList>
            <person name="Theologis A."/>
            <person name="Ecker J.R."/>
            <person name="Palm C.J."/>
            <person name="Federspiel N.A."/>
            <person name="Kaul S."/>
            <person name="White O."/>
            <person name="Alonso J."/>
            <person name="Altafi H."/>
            <person name="Araujo R."/>
            <person name="Bowman C.L."/>
            <person name="Brooks S.Y."/>
            <person name="Buehler E."/>
            <person name="Chan A."/>
            <person name="Chao Q."/>
            <person name="Chen H."/>
            <person name="Cheuk R.F."/>
            <person name="Chin C.W."/>
            <person name="Chung M.K."/>
            <person name="Conn L."/>
            <person name="Conway A.B."/>
            <person name="Conway A.R."/>
            <person name="Creasy T.H."/>
            <person name="Dewar K."/>
            <person name="Dunn P."/>
            <person name="Etgu P."/>
            <person name="Feldblyum T.V."/>
            <person name="Feng J.-D."/>
            <person name="Fong B."/>
            <person name="Fujii C.Y."/>
            <person name="Gill J.E."/>
            <person name="Goldsmith A.D."/>
            <person name="Haas B."/>
            <person name="Hansen N.F."/>
            <person name="Hughes B."/>
            <person name="Huizar L."/>
            <person name="Hunter J.L."/>
            <person name="Jenkins J."/>
            <person name="Johnson-Hopson C."/>
            <person name="Khan S."/>
            <person name="Khaykin E."/>
            <person name="Kim C.J."/>
            <person name="Koo H.L."/>
            <person name="Kremenetskaia I."/>
            <person name="Kurtz D.B."/>
            <person name="Kwan A."/>
            <person name="Lam B."/>
            <person name="Langin-Hooper S."/>
            <person name="Lee A."/>
            <person name="Lee J.M."/>
            <person name="Lenz C.A."/>
            <person name="Li J.H."/>
            <person name="Li Y.-P."/>
            <person name="Lin X."/>
            <person name="Liu S.X."/>
            <person name="Liu Z.A."/>
            <person name="Luros J.S."/>
            <person name="Maiti R."/>
            <person name="Marziali A."/>
            <person name="Militscher J."/>
            <person name="Miranda M."/>
            <person name="Nguyen M."/>
            <person name="Nierman W.C."/>
            <person name="Osborne B.I."/>
            <person name="Pai G."/>
            <person name="Peterson J."/>
            <person name="Pham P.K."/>
            <person name="Rizzo M."/>
            <person name="Rooney T."/>
            <person name="Rowley D."/>
            <person name="Sakano H."/>
            <person name="Salzberg S.L."/>
            <person name="Schwartz J.R."/>
            <person name="Shinn P."/>
            <person name="Southwick A.M."/>
            <person name="Sun H."/>
            <person name="Tallon L.J."/>
            <person name="Tambunga G."/>
            <person name="Toriumi M.J."/>
            <person name="Town C.D."/>
            <person name="Utterback T."/>
            <person name="Van Aken S."/>
            <person name="Vaysberg M."/>
            <person name="Vysotskaia V.S."/>
            <person name="Walker M."/>
            <person name="Wu D."/>
            <person name="Yu G."/>
            <person name="Fraser C.M."/>
            <person name="Venter J.C."/>
            <person name="Davis R.W."/>
        </authorList>
    </citation>
    <scope>NUCLEOTIDE SEQUENCE [LARGE SCALE GENOMIC DNA]</scope>
    <source>
        <strain>cv. Columbia</strain>
    </source>
</reference>
<reference key="3">
    <citation type="journal article" date="2017" name="Plant J.">
        <title>Araport11: a complete reannotation of the Arabidopsis thaliana reference genome.</title>
        <authorList>
            <person name="Cheng C.Y."/>
            <person name="Krishnakumar V."/>
            <person name="Chan A.P."/>
            <person name="Thibaud-Nissen F."/>
            <person name="Schobel S."/>
            <person name="Town C.D."/>
        </authorList>
    </citation>
    <scope>GENOME REANNOTATION</scope>
    <source>
        <strain>cv. Columbia</strain>
    </source>
</reference>
<reference key="4">
    <citation type="journal article" date="2003" name="Genes Dev.">
        <title>The Polycomb-group protein MEDEA regulates seed development by controlling expression of the MADS-box gene PHERES1.</title>
        <authorList>
            <person name="Koehler C."/>
            <person name="Hennig L."/>
            <person name="Spillane C."/>
            <person name="Pien S."/>
            <person name="Gruissem W."/>
            <person name="Grossniklaus U."/>
        </authorList>
    </citation>
    <scope>INDUCTION</scope>
    <scope>TISSUE SPECIFICITY</scope>
</reference>
<reference key="5">
    <citation type="journal article" date="2005" name="Plant J.">
        <title>PICKLE acts during germination to repress expression of embryonic traits.</title>
        <authorList>
            <person name="Li H.-C."/>
            <person name="Chuang K."/>
            <person name="Henderson J.T."/>
            <person name="Rider S.D. Jr."/>
            <person name="Bai Y."/>
            <person name="Zhang H."/>
            <person name="Fountain M."/>
            <person name="Gerber J."/>
            <person name="Ogas J."/>
        </authorList>
    </citation>
    <scope>INDUCTION</scope>
</reference>
<reference key="6">
    <citation type="journal article" date="2005" name="Plant Cell">
        <title>Comprehensive interaction map of the Arabidopsis MADS Box transcription factors.</title>
        <authorList>
            <person name="de Folter S."/>
            <person name="Immink R.G.H."/>
            <person name="Kieffer M."/>
            <person name="Parenicova L."/>
            <person name="Henz S.R."/>
            <person name="Weigel D."/>
            <person name="Busscher M."/>
            <person name="Kooiker M."/>
            <person name="Colombo L."/>
            <person name="Kater M.M."/>
            <person name="Davies B."/>
            <person name="Angenent G.C."/>
        </authorList>
    </citation>
    <scope>INTERACTION WITH AGL62</scope>
</reference>
<reference key="7">
    <citation type="journal article" date="2008" name="Plant Cell">
        <title>The MADS domain protein DIANA acts together with AGAMOUS-LIKE80 to specify the central cell in Arabidopsis ovules.</title>
        <authorList>
            <person name="Bemer M."/>
            <person name="Wolters-Arts M."/>
            <person name="Grossniklaus U."/>
            <person name="Angenent G.C."/>
        </authorList>
    </citation>
    <scope>INTERACTION WITH AGL61</scope>
</reference>
<organism>
    <name type="scientific">Arabidopsis thaliana</name>
    <name type="common">Mouse-ear cress</name>
    <dbReference type="NCBI Taxonomy" id="3702"/>
    <lineage>
        <taxon>Eukaryota</taxon>
        <taxon>Viridiplantae</taxon>
        <taxon>Streptophyta</taxon>
        <taxon>Embryophyta</taxon>
        <taxon>Tracheophyta</taxon>
        <taxon>Spermatophyta</taxon>
        <taxon>Magnoliopsida</taxon>
        <taxon>eudicotyledons</taxon>
        <taxon>Gunneridae</taxon>
        <taxon>Pentapetalae</taxon>
        <taxon>rosids</taxon>
        <taxon>malvids</taxon>
        <taxon>Brassicales</taxon>
        <taxon>Brassicaceae</taxon>
        <taxon>Camelineae</taxon>
        <taxon>Arabidopsis</taxon>
    </lineage>
</organism>
<dbReference type="EMBL" id="AY141245">
    <property type="protein sequence ID" value="AAN52809.1"/>
    <property type="molecule type" value="mRNA"/>
</dbReference>
<dbReference type="EMBL" id="AC004512">
    <property type="protein sequence ID" value="AAC27141.1"/>
    <property type="status" value="ALT_INIT"/>
    <property type="molecule type" value="Genomic_DNA"/>
</dbReference>
<dbReference type="EMBL" id="CP002684">
    <property type="protein sequence ID" value="AEE34356.1"/>
    <property type="molecule type" value="Genomic_DNA"/>
</dbReference>
<dbReference type="PIR" id="T02353">
    <property type="entry name" value="T02353"/>
</dbReference>
<dbReference type="RefSeq" id="NP_176709.2">
    <property type="nucleotide sequence ID" value="NM_105204.3"/>
</dbReference>
<dbReference type="SMR" id="Q7XJK8"/>
<dbReference type="BioGRID" id="28059">
    <property type="interactions" value="5"/>
</dbReference>
<dbReference type="FunCoup" id="Q7XJK8">
    <property type="interactions" value="24"/>
</dbReference>
<dbReference type="IntAct" id="Q7XJK8">
    <property type="interactions" value="6"/>
</dbReference>
<dbReference type="STRING" id="3702.Q7XJK8"/>
<dbReference type="iPTMnet" id="Q7XJK8"/>
<dbReference type="PaxDb" id="3702-AT1G65300.1"/>
<dbReference type="EnsemblPlants" id="AT1G65300.1">
    <property type="protein sequence ID" value="AT1G65300.1"/>
    <property type="gene ID" value="AT1G65300"/>
</dbReference>
<dbReference type="GeneID" id="842838"/>
<dbReference type="Gramene" id="AT1G65300.1">
    <property type="protein sequence ID" value="AT1G65300.1"/>
    <property type="gene ID" value="AT1G65300"/>
</dbReference>
<dbReference type="KEGG" id="ath:AT1G65300"/>
<dbReference type="Araport" id="AT1G65300"/>
<dbReference type="TAIR" id="AT1G65300">
    <property type="gene designation" value="AGL38"/>
</dbReference>
<dbReference type="eggNOG" id="KOG0014">
    <property type="taxonomic scope" value="Eukaryota"/>
</dbReference>
<dbReference type="HOGENOM" id="CLU_053053_7_1_1"/>
<dbReference type="InParanoid" id="Q7XJK8"/>
<dbReference type="OMA" id="IANDCAR"/>
<dbReference type="PhylomeDB" id="Q7XJK8"/>
<dbReference type="PRO" id="PR:Q7XJK8"/>
<dbReference type="Proteomes" id="UP000006548">
    <property type="component" value="Chromosome 1"/>
</dbReference>
<dbReference type="ExpressionAtlas" id="Q7XJK8">
    <property type="expression patterns" value="baseline and differential"/>
</dbReference>
<dbReference type="GO" id="GO:0005634">
    <property type="term" value="C:nucleus"/>
    <property type="evidence" value="ECO:0007669"/>
    <property type="project" value="UniProtKB-SubCell"/>
</dbReference>
<dbReference type="GO" id="GO:0000987">
    <property type="term" value="F:cis-regulatory region sequence-specific DNA binding"/>
    <property type="evidence" value="ECO:0007669"/>
    <property type="project" value="InterPro"/>
</dbReference>
<dbReference type="GO" id="GO:0003700">
    <property type="term" value="F:DNA-binding transcription factor activity"/>
    <property type="evidence" value="ECO:0000250"/>
    <property type="project" value="TAIR"/>
</dbReference>
<dbReference type="GO" id="GO:0000981">
    <property type="term" value="F:DNA-binding transcription factor activity, RNA polymerase II-specific"/>
    <property type="evidence" value="ECO:0007669"/>
    <property type="project" value="InterPro"/>
</dbReference>
<dbReference type="GO" id="GO:0046983">
    <property type="term" value="F:protein dimerization activity"/>
    <property type="evidence" value="ECO:0007669"/>
    <property type="project" value="InterPro"/>
</dbReference>
<dbReference type="GO" id="GO:0045944">
    <property type="term" value="P:positive regulation of transcription by RNA polymerase II"/>
    <property type="evidence" value="ECO:0007669"/>
    <property type="project" value="InterPro"/>
</dbReference>
<dbReference type="CDD" id="cd00266">
    <property type="entry name" value="MADS_SRF_like"/>
    <property type="match status" value="1"/>
</dbReference>
<dbReference type="FunFam" id="3.40.1810.10:FF:000024">
    <property type="entry name" value="Agamous-like MADS-box protein AGL80"/>
    <property type="match status" value="1"/>
</dbReference>
<dbReference type="Gene3D" id="3.40.1810.10">
    <property type="entry name" value="Transcription factor, MADS-box"/>
    <property type="match status" value="1"/>
</dbReference>
<dbReference type="InterPro" id="IPR050142">
    <property type="entry name" value="MADS-box/MEF2_TF"/>
</dbReference>
<dbReference type="InterPro" id="IPR033897">
    <property type="entry name" value="SRF-like_MADS-box"/>
</dbReference>
<dbReference type="InterPro" id="IPR002100">
    <property type="entry name" value="TF_MADSbox"/>
</dbReference>
<dbReference type="InterPro" id="IPR036879">
    <property type="entry name" value="TF_MADSbox_sf"/>
</dbReference>
<dbReference type="PANTHER" id="PTHR48019">
    <property type="entry name" value="SERUM RESPONSE FACTOR HOMOLOG"/>
    <property type="match status" value="1"/>
</dbReference>
<dbReference type="Pfam" id="PF00319">
    <property type="entry name" value="SRF-TF"/>
    <property type="match status" value="1"/>
</dbReference>
<dbReference type="PRINTS" id="PR00404">
    <property type="entry name" value="MADSDOMAIN"/>
</dbReference>
<dbReference type="SMART" id="SM00432">
    <property type="entry name" value="MADS"/>
    <property type="match status" value="1"/>
</dbReference>
<dbReference type="SUPFAM" id="SSF55455">
    <property type="entry name" value="SRF-like"/>
    <property type="match status" value="1"/>
</dbReference>
<dbReference type="PROSITE" id="PS50066">
    <property type="entry name" value="MADS_BOX_2"/>
    <property type="match status" value="1"/>
</dbReference>
<keyword id="KW-0238">DNA-binding</keyword>
<keyword id="KW-0539">Nucleus</keyword>
<keyword id="KW-1185">Reference proteome</keyword>
<keyword id="KW-0804">Transcription</keyword>
<keyword id="KW-0805">Transcription regulation</keyword>
<feature type="chain" id="PRO_0000233176" description="MADS-box transcription factor PHERES 2">
    <location>
        <begin position="1"/>
        <end position="278"/>
    </location>
</feature>
<feature type="domain" description="MADS-box" evidence="1">
    <location>
        <begin position="1"/>
        <end position="60"/>
    </location>
</feature>